<accession>Q6PN83</accession>
<dbReference type="EMBL" id="AY591767">
    <property type="protein sequence ID" value="AAT01631.1"/>
    <property type="molecule type" value="mRNA"/>
</dbReference>
<dbReference type="ConoServer" id="858">
    <property type="toxin name" value="Gla-MrIV precursor"/>
</dbReference>
<dbReference type="GO" id="GO:0005576">
    <property type="term" value="C:extracellular region"/>
    <property type="evidence" value="ECO:0007669"/>
    <property type="project" value="UniProtKB-SubCell"/>
</dbReference>
<dbReference type="GO" id="GO:0090729">
    <property type="term" value="F:toxin activity"/>
    <property type="evidence" value="ECO:0007669"/>
    <property type="project" value="UniProtKB-KW"/>
</dbReference>
<dbReference type="InterPro" id="IPR031565">
    <property type="entry name" value="T-conotoxin"/>
</dbReference>
<dbReference type="Pfam" id="PF16981">
    <property type="entry name" value="Chi-conotoxin"/>
    <property type="match status" value="1"/>
</dbReference>
<evidence type="ECO:0000255" key="1"/>
<evidence type="ECO:0000269" key="2">
    <source>
    </source>
</evidence>
<evidence type="ECO:0000303" key="3">
    <source>
    </source>
</evidence>
<evidence type="ECO:0000303" key="4">
    <source>
    </source>
</evidence>
<evidence type="ECO:0000305" key="5"/>
<evidence type="ECO:0000305" key="6">
    <source>
    </source>
</evidence>
<organism>
    <name type="scientific">Conus marmoreus</name>
    <name type="common">Marble cone</name>
    <dbReference type="NCBI Taxonomy" id="42752"/>
    <lineage>
        <taxon>Eukaryota</taxon>
        <taxon>Metazoa</taxon>
        <taxon>Spiralia</taxon>
        <taxon>Lophotrochozoa</taxon>
        <taxon>Mollusca</taxon>
        <taxon>Gastropoda</taxon>
        <taxon>Caenogastropoda</taxon>
        <taxon>Neogastropoda</taxon>
        <taxon>Conoidea</taxon>
        <taxon>Conidae</taxon>
        <taxon>Conus</taxon>
    </lineage>
</organism>
<name>CT53_CONMR</name>
<reference key="1">
    <citation type="journal article" date="2005" name="Toxicon">
        <title>Sequence diversity of T-superfamily conotoxins from Conus marmoreus.</title>
        <authorList>
            <person name="Han Y.-H."/>
            <person name="Wang Q."/>
            <person name="Jiang H."/>
            <person name="Miao X.-W."/>
            <person name="Chen J.-S."/>
            <person name="Chi C.-W."/>
        </authorList>
    </citation>
    <scope>NUCLEOTIDE SEQUENCE [MRNA]</scope>
    <source>
        <tissue>Venom duct</tissue>
    </source>
</reference>
<reference key="2">
    <citation type="journal article" date="2004" name="Biochem. Biophys. Res. Commun.">
        <title>Isolation and characterization of three novel Gla-containing Conus marmoreus venom peptides, one with a novel cysteine pattern.</title>
        <authorList>
            <person name="Hansson K."/>
            <person name="Furie B."/>
            <person name="Furie B.C."/>
            <person name="Stenflo J."/>
        </authorList>
    </citation>
    <scope>PROTEIN SEQUENCE</scope>
    <scope>GAMMA-CARBOXYGLUTAMATION AT GLU-56 AND GLU-60</scope>
    <scope>MASS SPECTROMETRY</scope>
    <scope>SUBCELLULAR LOCATION</scope>
    <source>
        <tissue>Venom</tissue>
    </source>
</reference>
<comment type="subcellular location">
    <subcellularLocation>
        <location evidence="2">Secreted</location>
    </subcellularLocation>
</comment>
<comment type="tissue specificity">
    <text evidence="6">Expressed by the venom duct.</text>
</comment>
<comment type="domain">
    <text evidence="5">The cysteine framework is V (CC-CC).</text>
</comment>
<comment type="PTM">
    <text evidence="5">Contains 2 disulfide bonds that can be either 'C1-C3, C2-C4' or 'C1-C4, C2-C3', since these disulfide connectivities have been observed for conotoxins with cysteine framework V (for examples, see AC P0DQQ7 and AC P81755).</text>
</comment>
<comment type="mass spectrometry"/>
<comment type="similarity">
    <text evidence="5">Belongs to the conotoxin T superfamily.</text>
</comment>
<sequence>MRCVPVFVILLLLIASVPSVDAQLKTKDDMPLASSHANVKRTLQILRNKRCCITFESCCEFDLK</sequence>
<proteinExistence type="evidence at protein level"/>
<keyword id="KW-0165">Cleavage on pair of basic residues</keyword>
<keyword id="KW-0903">Direct protein sequencing</keyword>
<keyword id="KW-1015">Disulfide bond</keyword>
<keyword id="KW-0301">Gamma-carboxyglutamic acid</keyword>
<keyword id="KW-0964">Secreted</keyword>
<keyword id="KW-0732">Signal</keyword>
<keyword id="KW-0800">Toxin</keyword>
<protein>
    <recommendedName>
        <fullName evidence="4">Conotoxin mr5.3</fullName>
    </recommendedName>
    <alternativeName>
        <fullName evidence="3">Gla-MrIV</fullName>
    </alternativeName>
</protein>
<feature type="signal peptide" evidence="1">
    <location>
        <begin position="1"/>
        <end position="19"/>
    </location>
</feature>
<feature type="propeptide" id="PRO_0000035035" evidence="6">
    <location>
        <begin position="20"/>
        <end position="48"/>
    </location>
</feature>
<feature type="peptide" id="PRO_0000035036" description="Conotoxin mr5.3" evidence="2">
    <location>
        <begin position="51"/>
        <end position="63"/>
    </location>
</feature>
<feature type="modified residue" description="4-carboxyglutamate" evidence="2">
    <location>
        <position position="56"/>
    </location>
</feature>
<feature type="modified residue" description="4-carboxyglutamate" evidence="2">
    <location>
        <position position="60"/>
    </location>
</feature>